<sequence length="313" mass="33428">MDQGFRQWLTTVFRDRVKWDEPMSRHTTLGVGGPADALVAPETVSELRELIGRCRAQNIAFMVLAGGSNLLVRDRGIRGIVIDMKKYWQTIERHSDRGSGARLTVGAGLTLAALCRYAADNGLAGMTFAVGIPGTVGGAVAMNAGTAEGWMGDVVEAVEMVTGDGRRIRKEKQDLVFSYRRFAVRNDDTATPGPPVITGVDLGLGFDDSEALKAAAEERRRRRTATQPAGFRSAGCFFKNPEAGDPAGKLIDRAGLKGLAVGGAVVSEAHGNFLVNRGNATAGDLLALMETVQRRVADRFGVTLEPEVTIVGQ</sequence>
<comment type="function">
    <text evidence="1">Cell wall formation.</text>
</comment>
<comment type="catalytic activity">
    <reaction evidence="1">
        <text>UDP-N-acetyl-alpha-D-muramate + NADP(+) = UDP-N-acetyl-3-O-(1-carboxyvinyl)-alpha-D-glucosamine + NADPH + H(+)</text>
        <dbReference type="Rhea" id="RHEA:12248"/>
        <dbReference type="ChEBI" id="CHEBI:15378"/>
        <dbReference type="ChEBI" id="CHEBI:57783"/>
        <dbReference type="ChEBI" id="CHEBI:58349"/>
        <dbReference type="ChEBI" id="CHEBI:68483"/>
        <dbReference type="ChEBI" id="CHEBI:70757"/>
        <dbReference type="EC" id="1.3.1.98"/>
    </reaction>
</comment>
<comment type="cofactor">
    <cofactor evidence="1">
        <name>FAD</name>
        <dbReference type="ChEBI" id="CHEBI:57692"/>
    </cofactor>
</comment>
<comment type="pathway">
    <text evidence="1">Cell wall biogenesis; peptidoglycan biosynthesis.</text>
</comment>
<comment type="subcellular location">
    <subcellularLocation>
        <location evidence="1">Cytoplasm</location>
    </subcellularLocation>
</comment>
<comment type="similarity">
    <text evidence="1">Belongs to the MurB family.</text>
</comment>
<keyword id="KW-0131">Cell cycle</keyword>
<keyword id="KW-0132">Cell division</keyword>
<keyword id="KW-0133">Cell shape</keyword>
<keyword id="KW-0961">Cell wall biogenesis/degradation</keyword>
<keyword id="KW-0963">Cytoplasm</keyword>
<keyword id="KW-0274">FAD</keyword>
<keyword id="KW-0285">Flavoprotein</keyword>
<keyword id="KW-0521">NADP</keyword>
<keyword id="KW-0560">Oxidoreductase</keyword>
<keyword id="KW-0573">Peptidoglycan synthesis</keyword>
<keyword id="KW-1185">Reference proteome</keyword>
<reference key="1">
    <citation type="submission" date="2007-10" db="EMBL/GenBank/DDBJ databases">
        <title>Complete sequence of Desulfococcus oleovorans Hxd3.</title>
        <authorList>
            <consortium name="US DOE Joint Genome Institute"/>
            <person name="Copeland A."/>
            <person name="Lucas S."/>
            <person name="Lapidus A."/>
            <person name="Barry K."/>
            <person name="Glavina del Rio T."/>
            <person name="Dalin E."/>
            <person name="Tice H."/>
            <person name="Pitluck S."/>
            <person name="Kiss H."/>
            <person name="Brettin T."/>
            <person name="Bruce D."/>
            <person name="Detter J.C."/>
            <person name="Han C."/>
            <person name="Schmutz J."/>
            <person name="Larimer F."/>
            <person name="Land M."/>
            <person name="Hauser L."/>
            <person name="Kyrpides N."/>
            <person name="Kim E."/>
            <person name="Wawrik B."/>
            <person name="Richardson P."/>
        </authorList>
    </citation>
    <scope>NUCLEOTIDE SEQUENCE [LARGE SCALE GENOMIC DNA]</scope>
    <source>
        <strain>DSM 6200 / JCM 39069 / Hxd3</strain>
    </source>
</reference>
<protein>
    <recommendedName>
        <fullName evidence="1">UDP-N-acetylenolpyruvoylglucosamine reductase</fullName>
        <ecNumber evidence="1">1.3.1.98</ecNumber>
    </recommendedName>
    <alternativeName>
        <fullName evidence="1">UDP-N-acetylmuramate dehydrogenase</fullName>
    </alternativeName>
</protein>
<name>MURB_DESOH</name>
<feature type="chain" id="PRO_1000191421" description="UDP-N-acetylenolpyruvoylglucosamine reductase">
    <location>
        <begin position="1"/>
        <end position="313"/>
    </location>
</feature>
<feature type="domain" description="FAD-binding PCMH-type" evidence="1">
    <location>
        <begin position="31"/>
        <end position="207"/>
    </location>
</feature>
<feature type="active site" evidence="1">
    <location>
        <position position="180"/>
    </location>
</feature>
<feature type="active site" description="Proton donor" evidence="1">
    <location>
        <position position="236"/>
    </location>
</feature>
<feature type="active site" evidence="1">
    <location>
        <position position="307"/>
    </location>
</feature>
<organism>
    <name type="scientific">Desulfosudis oleivorans (strain DSM 6200 / JCM 39069 / Hxd3)</name>
    <name type="common">Desulfococcus oleovorans</name>
    <dbReference type="NCBI Taxonomy" id="96561"/>
    <lineage>
        <taxon>Bacteria</taxon>
        <taxon>Pseudomonadati</taxon>
        <taxon>Thermodesulfobacteriota</taxon>
        <taxon>Desulfobacteria</taxon>
        <taxon>Desulfobacterales</taxon>
        <taxon>Desulfosudaceae</taxon>
        <taxon>Desulfosudis</taxon>
    </lineage>
</organism>
<dbReference type="EC" id="1.3.1.98" evidence="1"/>
<dbReference type="EMBL" id="CP000859">
    <property type="protein sequence ID" value="ABW68588.1"/>
    <property type="molecule type" value="Genomic_DNA"/>
</dbReference>
<dbReference type="RefSeq" id="WP_012176199.1">
    <property type="nucleotide sequence ID" value="NC_009943.1"/>
</dbReference>
<dbReference type="SMR" id="A8ZXW1"/>
<dbReference type="STRING" id="96561.Dole_2785"/>
<dbReference type="KEGG" id="dol:Dole_2785"/>
<dbReference type="eggNOG" id="COG0812">
    <property type="taxonomic scope" value="Bacteria"/>
</dbReference>
<dbReference type="HOGENOM" id="CLU_035304_1_1_7"/>
<dbReference type="UniPathway" id="UPA00219"/>
<dbReference type="Proteomes" id="UP000008561">
    <property type="component" value="Chromosome"/>
</dbReference>
<dbReference type="GO" id="GO:0005829">
    <property type="term" value="C:cytosol"/>
    <property type="evidence" value="ECO:0007669"/>
    <property type="project" value="TreeGrafter"/>
</dbReference>
<dbReference type="GO" id="GO:0071949">
    <property type="term" value="F:FAD binding"/>
    <property type="evidence" value="ECO:0007669"/>
    <property type="project" value="InterPro"/>
</dbReference>
<dbReference type="GO" id="GO:0008762">
    <property type="term" value="F:UDP-N-acetylmuramate dehydrogenase activity"/>
    <property type="evidence" value="ECO:0007669"/>
    <property type="project" value="UniProtKB-UniRule"/>
</dbReference>
<dbReference type="GO" id="GO:0051301">
    <property type="term" value="P:cell division"/>
    <property type="evidence" value="ECO:0007669"/>
    <property type="project" value="UniProtKB-KW"/>
</dbReference>
<dbReference type="GO" id="GO:0071555">
    <property type="term" value="P:cell wall organization"/>
    <property type="evidence" value="ECO:0007669"/>
    <property type="project" value="UniProtKB-KW"/>
</dbReference>
<dbReference type="GO" id="GO:0009252">
    <property type="term" value="P:peptidoglycan biosynthetic process"/>
    <property type="evidence" value="ECO:0007669"/>
    <property type="project" value="UniProtKB-UniRule"/>
</dbReference>
<dbReference type="GO" id="GO:0008360">
    <property type="term" value="P:regulation of cell shape"/>
    <property type="evidence" value="ECO:0007669"/>
    <property type="project" value="UniProtKB-KW"/>
</dbReference>
<dbReference type="Gene3D" id="3.30.465.10">
    <property type="match status" value="1"/>
</dbReference>
<dbReference type="Gene3D" id="3.90.78.10">
    <property type="entry name" value="UDP-N-acetylenolpyruvoylglucosamine reductase, C-terminal domain"/>
    <property type="match status" value="1"/>
</dbReference>
<dbReference type="Gene3D" id="3.30.43.10">
    <property type="entry name" value="Uridine Diphospho-n-acetylenolpyruvylglucosamine Reductase, domain 2"/>
    <property type="match status" value="1"/>
</dbReference>
<dbReference type="HAMAP" id="MF_00037">
    <property type="entry name" value="MurB"/>
    <property type="match status" value="1"/>
</dbReference>
<dbReference type="InterPro" id="IPR016166">
    <property type="entry name" value="FAD-bd_PCMH"/>
</dbReference>
<dbReference type="InterPro" id="IPR036318">
    <property type="entry name" value="FAD-bd_PCMH-like_sf"/>
</dbReference>
<dbReference type="InterPro" id="IPR016167">
    <property type="entry name" value="FAD-bd_PCMH_sub1"/>
</dbReference>
<dbReference type="InterPro" id="IPR016169">
    <property type="entry name" value="FAD-bd_PCMH_sub2"/>
</dbReference>
<dbReference type="InterPro" id="IPR003170">
    <property type="entry name" value="MurB"/>
</dbReference>
<dbReference type="InterPro" id="IPR011601">
    <property type="entry name" value="MurB_C"/>
</dbReference>
<dbReference type="InterPro" id="IPR036635">
    <property type="entry name" value="MurB_C_sf"/>
</dbReference>
<dbReference type="InterPro" id="IPR006094">
    <property type="entry name" value="Oxid_FAD_bind_N"/>
</dbReference>
<dbReference type="NCBIfam" id="TIGR00179">
    <property type="entry name" value="murB"/>
    <property type="match status" value="1"/>
</dbReference>
<dbReference type="NCBIfam" id="NF010480">
    <property type="entry name" value="PRK13905.1"/>
    <property type="match status" value="1"/>
</dbReference>
<dbReference type="PANTHER" id="PTHR21071">
    <property type="entry name" value="UDP-N-ACETYLENOLPYRUVOYLGLUCOSAMINE REDUCTASE"/>
    <property type="match status" value="1"/>
</dbReference>
<dbReference type="PANTHER" id="PTHR21071:SF4">
    <property type="entry name" value="UDP-N-ACETYLENOLPYRUVOYLGLUCOSAMINE REDUCTASE"/>
    <property type="match status" value="1"/>
</dbReference>
<dbReference type="Pfam" id="PF01565">
    <property type="entry name" value="FAD_binding_4"/>
    <property type="match status" value="1"/>
</dbReference>
<dbReference type="Pfam" id="PF02873">
    <property type="entry name" value="MurB_C"/>
    <property type="match status" value="1"/>
</dbReference>
<dbReference type="SUPFAM" id="SSF56176">
    <property type="entry name" value="FAD-binding/transporter-associated domain-like"/>
    <property type="match status" value="1"/>
</dbReference>
<dbReference type="SUPFAM" id="SSF56194">
    <property type="entry name" value="Uridine diphospho-N-Acetylenolpyruvylglucosamine reductase, MurB, C-terminal domain"/>
    <property type="match status" value="1"/>
</dbReference>
<dbReference type="PROSITE" id="PS51387">
    <property type="entry name" value="FAD_PCMH"/>
    <property type="match status" value="1"/>
</dbReference>
<gene>
    <name evidence="1" type="primary">murB</name>
    <name type="ordered locus">Dole_2785</name>
</gene>
<proteinExistence type="inferred from homology"/>
<accession>A8ZXW1</accession>
<evidence type="ECO:0000255" key="1">
    <source>
        <dbReference type="HAMAP-Rule" id="MF_00037"/>
    </source>
</evidence>